<keyword id="KW-1185">Reference proteome</keyword>
<keyword id="KW-0687">Ribonucleoprotein</keyword>
<keyword id="KW-0689">Ribosomal protein</keyword>
<keyword id="KW-0694">RNA-binding</keyword>
<keyword id="KW-0699">rRNA-binding</keyword>
<reference key="1">
    <citation type="journal article" date="2010" name="ISME J.">
        <title>The complete genome sequence of the algal symbiont Dinoroseobacter shibae: a hitchhiker's guide to life in the sea.</title>
        <authorList>
            <person name="Wagner-Dobler I."/>
            <person name="Ballhausen B."/>
            <person name="Berger M."/>
            <person name="Brinkhoff T."/>
            <person name="Buchholz I."/>
            <person name="Bunk B."/>
            <person name="Cypionka H."/>
            <person name="Daniel R."/>
            <person name="Drepper T."/>
            <person name="Gerdts G."/>
            <person name="Hahnke S."/>
            <person name="Han C."/>
            <person name="Jahn D."/>
            <person name="Kalhoefer D."/>
            <person name="Kiss H."/>
            <person name="Klenk H.P."/>
            <person name="Kyrpides N."/>
            <person name="Liebl W."/>
            <person name="Liesegang H."/>
            <person name="Meincke L."/>
            <person name="Pati A."/>
            <person name="Petersen J."/>
            <person name="Piekarski T."/>
            <person name="Pommerenke C."/>
            <person name="Pradella S."/>
            <person name="Pukall R."/>
            <person name="Rabus R."/>
            <person name="Stackebrandt E."/>
            <person name="Thole S."/>
            <person name="Thompson L."/>
            <person name="Tielen P."/>
            <person name="Tomasch J."/>
            <person name="von Jan M."/>
            <person name="Wanphrut N."/>
            <person name="Wichels A."/>
            <person name="Zech H."/>
            <person name="Simon M."/>
        </authorList>
    </citation>
    <scope>NUCLEOTIDE SEQUENCE [LARGE SCALE GENOMIC DNA]</scope>
    <source>
        <strain>DSM 16493 / NCIMB 14021 / DFL 12</strain>
    </source>
</reference>
<name>RL23_DINSH</name>
<accession>A8LM50</accession>
<gene>
    <name evidence="1" type="primary">rplW</name>
    <name type="ordered locus">Dshi_0278</name>
</gene>
<comment type="function">
    <text evidence="1">One of the early assembly proteins it binds 23S rRNA. One of the proteins that surrounds the polypeptide exit tunnel on the outside of the ribosome. Forms the main docking site for trigger factor binding to the ribosome.</text>
</comment>
<comment type="subunit">
    <text evidence="1">Part of the 50S ribosomal subunit. Contacts protein L29, and trigger factor when it is bound to the ribosome.</text>
</comment>
<comment type="similarity">
    <text evidence="1">Belongs to the universal ribosomal protein uL23 family.</text>
</comment>
<sequence length="98" mass="10660">MTAKAQHYDVIRKPIITEKATLASENGAVVFEVAIDSNKPQIKEAVEALFGVKVKAVNTTITKGKTKRFRGTPGKRKDVKKAYVTLEEGNTIDVSTGL</sequence>
<evidence type="ECO:0000255" key="1">
    <source>
        <dbReference type="HAMAP-Rule" id="MF_01369"/>
    </source>
</evidence>
<evidence type="ECO:0000305" key="2"/>
<protein>
    <recommendedName>
        <fullName evidence="1">Large ribosomal subunit protein uL23</fullName>
    </recommendedName>
    <alternativeName>
        <fullName evidence="2">50S ribosomal protein L23</fullName>
    </alternativeName>
</protein>
<feature type="chain" id="PRO_1000087216" description="Large ribosomal subunit protein uL23">
    <location>
        <begin position="1"/>
        <end position="98"/>
    </location>
</feature>
<organism>
    <name type="scientific">Dinoroseobacter shibae (strain DSM 16493 / NCIMB 14021 / DFL 12)</name>
    <dbReference type="NCBI Taxonomy" id="398580"/>
    <lineage>
        <taxon>Bacteria</taxon>
        <taxon>Pseudomonadati</taxon>
        <taxon>Pseudomonadota</taxon>
        <taxon>Alphaproteobacteria</taxon>
        <taxon>Rhodobacterales</taxon>
        <taxon>Roseobacteraceae</taxon>
        <taxon>Dinoroseobacter</taxon>
    </lineage>
</organism>
<proteinExistence type="inferred from homology"/>
<dbReference type="EMBL" id="CP000830">
    <property type="protein sequence ID" value="ABV92027.1"/>
    <property type="molecule type" value="Genomic_DNA"/>
</dbReference>
<dbReference type="RefSeq" id="WP_012176958.1">
    <property type="nucleotide sequence ID" value="NC_009952.1"/>
</dbReference>
<dbReference type="SMR" id="A8LM50"/>
<dbReference type="STRING" id="398580.Dshi_0278"/>
<dbReference type="KEGG" id="dsh:Dshi_0278"/>
<dbReference type="eggNOG" id="COG0089">
    <property type="taxonomic scope" value="Bacteria"/>
</dbReference>
<dbReference type="HOGENOM" id="CLU_037562_3_1_5"/>
<dbReference type="OrthoDB" id="9793353at2"/>
<dbReference type="Proteomes" id="UP000006833">
    <property type="component" value="Chromosome"/>
</dbReference>
<dbReference type="GO" id="GO:1990904">
    <property type="term" value="C:ribonucleoprotein complex"/>
    <property type="evidence" value="ECO:0007669"/>
    <property type="project" value="UniProtKB-KW"/>
</dbReference>
<dbReference type="GO" id="GO:0005840">
    <property type="term" value="C:ribosome"/>
    <property type="evidence" value="ECO:0007669"/>
    <property type="project" value="UniProtKB-KW"/>
</dbReference>
<dbReference type="GO" id="GO:0019843">
    <property type="term" value="F:rRNA binding"/>
    <property type="evidence" value="ECO:0007669"/>
    <property type="project" value="UniProtKB-UniRule"/>
</dbReference>
<dbReference type="GO" id="GO:0003735">
    <property type="term" value="F:structural constituent of ribosome"/>
    <property type="evidence" value="ECO:0007669"/>
    <property type="project" value="InterPro"/>
</dbReference>
<dbReference type="GO" id="GO:0006412">
    <property type="term" value="P:translation"/>
    <property type="evidence" value="ECO:0007669"/>
    <property type="project" value="UniProtKB-UniRule"/>
</dbReference>
<dbReference type="FunFam" id="3.30.70.330:FF:000001">
    <property type="entry name" value="50S ribosomal protein L23"/>
    <property type="match status" value="1"/>
</dbReference>
<dbReference type="Gene3D" id="3.30.70.330">
    <property type="match status" value="1"/>
</dbReference>
<dbReference type="HAMAP" id="MF_01369_B">
    <property type="entry name" value="Ribosomal_uL23_B"/>
    <property type="match status" value="1"/>
</dbReference>
<dbReference type="InterPro" id="IPR012677">
    <property type="entry name" value="Nucleotide-bd_a/b_plait_sf"/>
</dbReference>
<dbReference type="InterPro" id="IPR013025">
    <property type="entry name" value="Ribosomal_uL23-like"/>
</dbReference>
<dbReference type="InterPro" id="IPR012678">
    <property type="entry name" value="Ribosomal_uL23/eL15/eS24_sf"/>
</dbReference>
<dbReference type="NCBIfam" id="NF004359">
    <property type="entry name" value="PRK05738.1-3"/>
    <property type="match status" value="1"/>
</dbReference>
<dbReference type="NCBIfam" id="NF004360">
    <property type="entry name" value="PRK05738.1-5"/>
    <property type="match status" value="1"/>
</dbReference>
<dbReference type="NCBIfam" id="NF004363">
    <property type="entry name" value="PRK05738.2-4"/>
    <property type="match status" value="1"/>
</dbReference>
<dbReference type="PANTHER" id="PTHR11620">
    <property type="entry name" value="60S RIBOSOMAL PROTEIN L23A"/>
    <property type="match status" value="1"/>
</dbReference>
<dbReference type="Pfam" id="PF00276">
    <property type="entry name" value="Ribosomal_L23"/>
    <property type="match status" value="1"/>
</dbReference>
<dbReference type="SUPFAM" id="SSF54189">
    <property type="entry name" value="Ribosomal proteins S24e, L23 and L15e"/>
    <property type="match status" value="1"/>
</dbReference>